<accession>Q5RFS7</accession>
<name>PP1R7_PONAB</name>
<feature type="initiator methionine" description="Removed" evidence="2">
    <location>
        <position position="1"/>
    </location>
</feature>
<feature type="chain" id="PRO_0000239615" description="Protein phosphatase 1 regulatory subunit 7">
    <location>
        <begin position="2"/>
        <end position="360"/>
    </location>
</feature>
<feature type="repeat" description="LRR 1">
    <location>
        <begin position="77"/>
        <end position="98"/>
    </location>
</feature>
<feature type="repeat" description="LRR 2">
    <location>
        <begin position="99"/>
        <end position="120"/>
    </location>
</feature>
<feature type="repeat" description="LRR 3">
    <location>
        <begin position="121"/>
        <end position="142"/>
    </location>
</feature>
<feature type="repeat" description="LRR 4">
    <location>
        <begin position="143"/>
        <end position="164"/>
    </location>
</feature>
<feature type="repeat" description="LRR 5">
    <location>
        <begin position="165"/>
        <end position="186"/>
    </location>
</feature>
<feature type="repeat" description="LRR 6">
    <location>
        <begin position="187"/>
        <end position="208"/>
    </location>
</feature>
<feature type="repeat" description="LRR 7">
    <location>
        <begin position="209"/>
        <end position="230"/>
    </location>
</feature>
<feature type="repeat" description="LRR 8">
    <location>
        <begin position="231"/>
        <end position="252"/>
    </location>
</feature>
<feature type="repeat" description="LRR 9">
    <location>
        <begin position="253"/>
        <end position="274"/>
    </location>
</feature>
<feature type="repeat" description="LRR 10">
    <location>
        <begin position="275"/>
        <end position="296"/>
    </location>
</feature>
<feature type="repeat" description="LRR 11">
    <location>
        <begin position="297"/>
        <end position="318"/>
    </location>
</feature>
<feature type="domain" description="LRRCT">
    <location>
        <begin position="331"/>
        <end position="360"/>
    </location>
</feature>
<feature type="region of interest" description="Disordered" evidence="3">
    <location>
        <begin position="1"/>
        <end position="64"/>
    </location>
</feature>
<feature type="compositionally biased region" description="Basic and acidic residues" evidence="3">
    <location>
        <begin position="17"/>
        <end position="34"/>
    </location>
</feature>
<feature type="compositionally biased region" description="Acidic residues" evidence="3">
    <location>
        <begin position="53"/>
        <end position="63"/>
    </location>
</feature>
<feature type="modified residue" description="N-acetylalanine" evidence="2">
    <location>
        <position position="2"/>
    </location>
</feature>
<feature type="modified residue" description="Phosphoserine" evidence="2">
    <location>
        <position position="12"/>
    </location>
</feature>
<feature type="modified residue" description="Phosphoserine" evidence="2">
    <location>
        <position position="24"/>
    </location>
</feature>
<feature type="modified residue" description="Phosphoserine" evidence="2">
    <location>
        <position position="27"/>
    </location>
</feature>
<feature type="modified residue" description="Phosphoserine" evidence="2">
    <location>
        <position position="44"/>
    </location>
</feature>
<feature type="modified residue" description="Phosphoserine" evidence="2">
    <location>
        <position position="47"/>
    </location>
</feature>
<feature type="modified residue" description="Phosphoserine" evidence="2">
    <location>
        <position position="322"/>
    </location>
</feature>
<protein>
    <recommendedName>
        <fullName>Protein phosphatase 1 regulatory subunit 7</fullName>
    </recommendedName>
    <alternativeName>
        <fullName>Protein phosphatase 1 regulatory subunit 22</fullName>
    </alternativeName>
</protein>
<gene>
    <name type="primary">PPP1R7</name>
    <name type="synonym">SDS22</name>
</gene>
<evidence type="ECO:0000250" key="1"/>
<evidence type="ECO:0000250" key="2">
    <source>
        <dbReference type="UniProtKB" id="Q15435"/>
    </source>
</evidence>
<evidence type="ECO:0000256" key="3">
    <source>
        <dbReference type="SAM" id="MobiDB-lite"/>
    </source>
</evidence>
<evidence type="ECO:0000305" key="4"/>
<organism>
    <name type="scientific">Pongo abelii</name>
    <name type="common">Sumatran orangutan</name>
    <name type="synonym">Pongo pygmaeus abelii</name>
    <dbReference type="NCBI Taxonomy" id="9601"/>
    <lineage>
        <taxon>Eukaryota</taxon>
        <taxon>Metazoa</taxon>
        <taxon>Chordata</taxon>
        <taxon>Craniata</taxon>
        <taxon>Vertebrata</taxon>
        <taxon>Euteleostomi</taxon>
        <taxon>Mammalia</taxon>
        <taxon>Eutheria</taxon>
        <taxon>Euarchontoglires</taxon>
        <taxon>Primates</taxon>
        <taxon>Haplorrhini</taxon>
        <taxon>Catarrhini</taxon>
        <taxon>Hominidae</taxon>
        <taxon>Pongo</taxon>
    </lineage>
</organism>
<sequence length="360" mass="41478">MAAERGAGQQQSQEMMEVDRRVESEESGDEEGKKHSSGIVADLSEQSLKDGEERGEEDPEEEHELPVDMETINLDRDAEDVDLNHYRIGKIEGFEVLKKVKTLCLRQNLIKCIENLEELQSLRELDLYDNQIKKIENLEALTELEILDISFNLLRNIEGVDKVTQLKKLFLVNNKISKIENLSNLHQLQMLELGSNRIRAIENIDTLTNLESLFLGKNKITKLQNLDALTNLTVLSMQSNRLTKIEGLQNLVNLQELYLSHNGIEVIEGLENNNKLTMLDIASNRIKKIENISHLTEPQEFWMNDNLLESWSDLDELKGARSLETVYLERNPLQKDPQYRRKVMLALPSVRQIDATFVRF</sequence>
<comment type="function">
    <text evidence="1">Regulatory subunit of protein phosphatase 1.</text>
</comment>
<comment type="subunit">
    <text evidence="1">Interacts with PPP1CA, PPP1CB and PPP1CC/PPP1G.</text>
</comment>
<comment type="subcellular location">
    <subcellularLocation>
        <location evidence="1">Nucleus</location>
    </subcellularLocation>
</comment>
<comment type="similarity">
    <text evidence="4">Belongs to the SDS22 family.</text>
</comment>
<dbReference type="EMBL" id="CR857075">
    <property type="protein sequence ID" value="CAH89380.1"/>
    <property type="molecule type" value="mRNA"/>
</dbReference>
<dbReference type="RefSeq" id="NP_001124579.1">
    <property type="nucleotide sequence ID" value="NM_001131107.1"/>
</dbReference>
<dbReference type="SMR" id="Q5RFS7"/>
<dbReference type="FunCoup" id="Q5RFS7">
    <property type="interactions" value="1593"/>
</dbReference>
<dbReference type="STRING" id="9601.ENSPPYP00000014933"/>
<dbReference type="GeneID" id="100171414"/>
<dbReference type="KEGG" id="pon:100171414"/>
<dbReference type="CTD" id="5510"/>
<dbReference type="eggNOG" id="KOG0531">
    <property type="taxonomic scope" value="Eukaryota"/>
</dbReference>
<dbReference type="InParanoid" id="Q5RFS7"/>
<dbReference type="OrthoDB" id="7451790at2759"/>
<dbReference type="Proteomes" id="UP000001595">
    <property type="component" value="Unplaced"/>
</dbReference>
<dbReference type="GO" id="GO:0005634">
    <property type="term" value="C:nucleus"/>
    <property type="evidence" value="ECO:0007669"/>
    <property type="project" value="UniProtKB-SubCell"/>
</dbReference>
<dbReference type="FunFam" id="3.80.10.10:FF:000055">
    <property type="entry name" value="Protein phosphatase 1 regulatory subunit 7"/>
    <property type="match status" value="1"/>
</dbReference>
<dbReference type="FunFam" id="3.80.10.10:FF:000127">
    <property type="entry name" value="protein phosphatase 1 regulatory subunit 7 isoform X2"/>
    <property type="match status" value="1"/>
</dbReference>
<dbReference type="Gene3D" id="3.80.10.10">
    <property type="entry name" value="Ribonuclease Inhibitor"/>
    <property type="match status" value="2"/>
</dbReference>
<dbReference type="InterPro" id="IPR050576">
    <property type="entry name" value="Cilia_flagella_integrity"/>
</dbReference>
<dbReference type="InterPro" id="IPR001611">
    <property type="entry name" value="Leu-rich_rpt"/>
</dbReference>
<dbReference type="InterPro" id="IPR025875">
    <property type="entry name" value="Leu-rich_rpt_4"/>
</dbReference>
<dbReference type="InterPro" id="IPR003591">
    <property type="entry name" value="Leu-rich_rpt_typical-subtyp"/>
</dbReference>
<dbReference type="InterPro" id="IPR032675">
    <property type="entry name" value="LRR_dom_sf"/>
</dbReference>
<dbReference type="InterPro" id="IPR003603">
    <property type="entry name" value="U2A'_phosphoprotein32A_C"/>
</dbReference>
<dbReference type="PANTHER" id="PTHR45973:SF23">
    <property type="entry name" value="PROTEIN PHOSPHATASE 1 REGULATORY SUBUNIT 7"/>
    <property type="match status" value="1"/>
</dbReference>
<dbReference type="PANTHER" id="PTHR45973">
    <property type="entry name" value="PROTEIN PHOSPHATASE 1 REGULATORY SUBUNIT SDS22-RELATED"/>
    <property type="match status" value="1"/>
</dbReference>
<dbReference type="Pfam" id="PF12799">
    <property type="entry name" value="LRR_4"/>
    <property type="match status" value="3"/>
</dbReference>
<dbReference type="Pfam" id="PF14580">
    <property type="entry name" value="LRR_9"/>
    <property type="match status" value="1"/>
</dbReference>
<dbReference type="SMART" id="SM00365">
    <property type="entry name" value="LRR_SD22"/>
    <property type="match status" value="10"/>
</dbReference>
<dbReference type="SMART" id="SM00369">
    <property type="entry name" value="LRR_TYP"/>
    <property type="match status" value="6"/>
</dbReference>
<dbReference type="SMART" id="SM00446">
    <property type="entry name" value="LRRcap"/>
    <property type="match status" value="1"/>
</dbReference>
<dbReference type="SUPFAM" id="SSF52058">
    <property type="entry name" value="L domain-like"/>
    <property type="match status" value="1"/>
</dbReference>
<dbReference type="PROSITE" id="PS51450">
    <property type="entry name" value="LRR"/>
    <property type="match status" value="12"/>
</dbReference>
<proteinExistence type="evidence at transcript level"/>
<keyword id="KW-0007">Acetylation</keyword>
<keyword id="KW-0433">Leucine-rich repeat</keyword>
<keyword id="KW-0539">Nucleus</keyword>
<keyword id="KW-0597">Phosphoprotein</keyword>
<keyword id="KW-1185">Reference proteome</keyword>
<keyword id="KW-0677">Repeat</keyword>
<reference key="1">
    <citation type="submission" date="2004-11" db="EMBL/GenBank/DDBJ databases">
        <authorList>
            <consortium name="The German cDNA consortium"/>
        </authorList>
    </citation>
    <scope>NUCLEOTIDE SEQUENCE [LARGE SCALE MRNA]</scope>
    <source>
        <tissue>Heart</tissue>
    </source>
</reference>